<name>AROC_ARATH</name>
<evidence type="ECO:0000250" key="1"/>
<evidence type="ECO:0000256" key="2">
    <source>
        <dbReference type="SAM" id="MobiDB-lite"/>
    </source>
</evidence>
<evidence type="ECO:0000305" key="3"/>
<gene>
    <name type="primary">EMB1144</name>
    <name type="ordered locus">At1g48850</name>
    <name type="ORF">F27K7.1</name>
    <name type="ORF">T24P22.3</name>
</gene>
<reference key="1">
    <citation type="journal article" date="2000" name="Nature">
        <title>Sequence and analysis of chromosome 1 of the plant Arabidopsis thaliana.</title>
        <authorList>
            <person name="Theologis A."/>
            <person name="Ecker J.R."/>
            <person name="Palm C.J."/>
            <person name="Federspiel N.A."/>
            <person name="Kaul S."/>
            <person name="White O."/>
            <person name="Alonso J."/>
            <person name="Altafi H."/>
            <person name="Araujo R."/>
            <person name="Bowman C.L."/>
            <person name="Brooks S.Y."/>
            <person name="Buehler E."/>
            <person name="Chan A."/>
            <person name="Chao Q."/>
            <person name="Chen H."/>
            <person name="Cheuk R.F."/>
            <person name="Chin C.W."/>
            <person name="Chung M.K."/>
            <person name="Conn L."/>
            <person name="Conway A.B."/>
            <person name="Conway A.R."/>
            <person name="Creasy T.H."/>
            <person name="Dewar K."/>
            <person name="Dunn P."/>
            <person name="Etgu P."/>
            <person name="Feldblyum T.V."/>
            <person name="Feng J.-D."/>
            <person name="Fong B."/>
            <person name="Fujii C.Y."/>
            <person name="Gill J.E."/>
            <person name="Goldsmith A.D."/>
            <person name="Haas B."/>
            <person name="Hansen N.F."/>
            <person name="Hughes B."/>
            <person name="Huizar L."/>
            <person name="Hunter J.L."/>
            <person name="Jenkins J."/>
            <person name="Johnson-Hopson C."/>
            <person name="Khan S."/>
            <person name="Khaykin E."/>
            <person name="Kim C.J."/>
            <person name="Koo H.L."/>
            <person name="Kremenetskaia I."/>
            <person name="Kurtz D.B."/>
            <person name="Kwan A."/>
            <person name="Lam B."/>
            <person name="Langin-Hooper S."/>
            <person name="Lee A."/>
            <person name="Lee J.M."/>
            <person name="Lenz C.A."/>
            <person name="Li J.H."/>
            <person name="Li Y.-P."/>
            <person name="Lin X."/>
            <person name="Liu S.X."/>
            <person name="Liu Z.A."/>
            <person name="Luros J.S."/>
            <person name="Maiti R."/>
            <person name="Marziali A."/>
            <person name="Militscher J."/>
            <person name="Miranda M."/>
            <person name="Nguyen M."/>
            <person name="Nierman W.C."/>
            <person name="Osborne B.I."/>
            <person name="Pai G."/>
            <person name="Peterson J."/>
            <person name="Pham P.K."/>
            <person name="Rizzo M."/>
            <person name="Rooney T."/>
            <person name="Rowley D."/>
            <person name="Sakano H."/>
            <person name="Salzberg S.L."/>
            <person name="Schwartz J.R."/>
            <person name="Shinn P."/>
            <person name="Southwick A.M."/>
            <person name="Sun H."/>
            <person name="Tallon L.J."/>
            <person name="Tambunga G."/>
            <person name="Toriumi M.J."/>
            <person name="Town C.D."/>
            <person name="Utterback T."/>
            <person name="Van Aken S."/>
            <person name="Vaysberg M."/>
            <person name="Vysotskaia V.S."/>
            <person name="Walker M."/>
            <person name="Wu D."/>
            <person name="Yu G."/>
            <person name="Fraser C.M."/>
            <person name="Venter J.C."/>
            <person name="Davis R.W."/>
        </authorList>
    </citation>
    <scope>NUCLEOTIDE SEQUENCE [LARGE SCALE GENOMIC DNA]</scope>
    <source>
        <strain>cv. Columbia</strain>
    </source>
</reference>
<reference key="2">
    <citation type="journal article" date="2017" name="Plant J.">
        <title>Araport11: a complete reannotation of the Arabidopsis thaliana reference genome.</title>
        <authorList>
            <person name="Cheng C.Y."/>
            <person name="Krishnakumar V."/>
            <person name="Chan A.P."/>
            <person name="Thibaud-Nissen F."/>
            <person name="Schobel S."/>
            <person name="Town C.D."/>
        </authorList>
    </citation>
    <scope>GENOME REANNOTATION</scope>
    <source>
        <strain>cv. Columbia</strain>
    </source>
</reference>
<reference key="3">
    <citation type="journal article" date="2003" name="Science">
        <title>Empirical analysis of transcriptional activity in the Arabidopsis genome.</title>
        <authorList>
            <person name="Yamada K."/>
            <person name="Lim J."/>
            <person name="Dale J.M."/>
            <person name="Chen H."/>
            <person name="Shinn P."/>
            <person name="Palm C.J."/>
            <person name="Southwick A.M."/>
            <person name="Wu H.C."/>
            <person name="Kim C.J."/>
            <person name="Nguyen M."/>
            <person name="Pham P.K."/>
            <person name="Cheuk R.F."/>
            <person name="Karlin-Newmann G."/>
            <person name="Liu S.X."/>
            <person name="Lam B."/>
            <person name="Sakano H."/>
            <person name="Wu T."/>
            <person name="Yu G."/>
            <person name="Miranda M."/>
            <person name="Quach H.L."/>
            <person name="Tripp M."/>
            <person name="Chang C.H."/>
            <person name="Lee J.M."/>
            <person name="Toriumi M.J."/>
            <person name="Chan M.M."/>
            <person name="Tang C.C."/>
            <person name="Onodera C.S."/>
            <person name="Deng J.M."/>
            <person name="Akiyama K."/>
            <person name="Ansari Y."/>
            <person name="Arakawa T."/>
            <person name="Banh J."/>
            <person name="Banno F."/>
            <person name="Bowser L."/>
            <person name="Brooks S.Y."/>
            <person name="Carninci P."/>
            <person name="Chao Q."/>
            <person name="Choy N."/>
            <person name="Enju A."/>
            <person name="Goldsmith A.D."/>
            <person name="Gurjal M."/>
            <person name="Hansen N.F."/>
            <person name="Hayashizaki Y."/>
            <person name="Johnson-Hopson C."/>
            <person name="Hsuan V.W."/>
            <person name="Iida K."/>
            <person name="Karnes M."/>
            <person name="Khan S."/>
            <person name="Koesema E."/>
            <person name="Ishida J."/>
            <person name="Jiang P.X."/>
            <person name="Jones T."/>
            <person name="Kawai J."/>
            <person name="Kamiya A."/>
            <person name="Meyers C."/>
            <person name="Nakajima M."/>
            <person name="Narusaka M."/>
            <person name="Seki M."/>
            <person name="Sakurai T."/>
            <person name="Satou M."/>
            <person name="Tamse R."/>
            <person name="Vaysberg M."/>
            <person name="Wallender E.K."/>
            <person name="Wong C."/>
            <person name="Yamamura Y."/>
            <person name="Yuan S."/>
            <person name="Shinozaki K."/>
            <person name="Davis R.W."/>
            <person name="Theologis A."/>
            <person name="Ecker J.R."/>
        </authorList>
    </citation>
    <scope>NUCLEOTIDE SEQUENCE [LARGE SCALE MRNA]</scope>
    <source>
        <strain>cv. Columbia</strain>
    </source>
</reference>
<reference key="4">
    <citation type="submission" date="2004-10" db="EMBL/GenBank/DDBJ databases">
        <title>Arabidopsis ORF clones.</title>
        <authorList>
            <person name="Shinn P."/>
            <person name="Chen H."/>
            <person name="Cheuk R.F."/>
            <person name="Kim C.J."/>
            <person name="Ecker J.R."/>
        </authorList>
    </citation>
    <scope>NUCLEOTIDE SEQUENCE [LARGE SCALE MRNA]</scope>
    <source>
        <strain>cv. Columbia</strain>
    </source>
</reference>
<reference key="5">
    <citation type="submission" date="2005-03" db="EMBL/GenBank/DDBJ databases">
        <title>Large-scale analysis of RIKEN Arabidopsis full-length (RAFL) cDNAs.</title>
        <authorList>
            <person name="Totoki Y."/>
            <person name="Seki M."/>
            <person name="Ishida J."/>
            <person name="Nakajima M."/>
            <person name="Enju A."/>
            <person name="Kamiya A."/>
            <person name="Narusaka M."/>
            <person name="Shin-i T."/>
            <person name="Nakagawa M."/>
            <person name="Sakamoto N."/>
            <person name="Oishi K."/>
            <person name="Kohara Y."/>
            <person name="Kobayashi M."/>
            <person name="Toyoda A."/>
            <person name="Sakaki Y."/>
            <person name="Sakurai T."/>
            <person name="Iida K."/>
            <person name="Akiyama K."/>
            <person name="Satou M."/>
            <person name="Toyoda T."/>
            <person name="Konagaya A."/>
            <person name="Carninci P."/>
            <person name="Kawai J."/>
            <person name="Hayashizaki Y."/>
            <person name="Shinozaki K."/>
        </authorList>
    </citation>
    <scope>NUCLEOTIDE SEQUENCE [LARGE SCALE MRNA] OF 335-436</scope>
    <source>
        <strain>cv. Columbia</strain>
    </source>
</reference>
<keyword id="KW-0025">Alternative splicing</keyword>
<keyword id="KW-0028">Amino-acid biosynthesis</keyword>
<keyword id="KW-0057">Aromatic amino acid biosynthesis</keyword>
<keyword id="KW-0150">Chloroplast</keyword>
<keyword id="KW-0456">Lyase</keyword>
<keyword id="KW-0934">Plastid</keyword>
<keyword id="KW-1185">Reference proteome</keyword>
<keyword id="KW-0809">Transit peptide</keyword>
<sequence>MASSSLTSKSILGSTKLGSSSLPSELRRLSSPAVQISLRTQTRKNFQIQATGSSYGTHFRVSTFGESHGGGVGCIIDGCPPRIPLTESDLQFDLDRRRPGQSRITTPRKETDTCRISSGVSEGMTTGTPIHVFVPNTDQRGLDYSEMSVAYRPSHADATYDMKYGVRSVQGGGRSSARETIGRVAPGALAKKILKQFAGTEILAYVSQVHHVVLPEELVDHENLTLEQIENNIVRCPNPEYAEKMIAAIDAVRTKGNSVGGVVTCIVRNAPRGLGTPVFDKLEAELAKACMSLPATKGFEFGSGFAGTFLTGLEHNDEFYTDENGRIRTRTNRSGGIQGGISNGEIINMRVAFKPTSTIGRKQNTVTRDKVETEMIARGRHDPCVVPRAVPMVEAMVALVLVDQLMAQYAQCHLFPINPELQEPLQIEQPQNATAL</sequence>
<dbReference type="EC" id="4.2.3.5"/>
<dbReference type="EMBL" id="AC084242">
    <property type="protein sequence ID" value="AAG50662.1"/>
    <property type="status" value="ALT_SEQ"/>
    <property type="molecule type" value="Genomic_DNA"/>
</dbReference>
<dbReference type="EMBL" id="AC084414">
    <property type="protein sequence ID" value="AAG29740.1"/>
    <property type="status" value="ALT_SEQ"/>
    <property type="molecule type" value="Genomic_DNA"/>
</dbReference>
<dbReference type="EMBL" id="CP002684">
    <property type="protein sequence ID" value="AEE32356.1"/>
    <property type="molecule type" value="Genomic_DNA"/>
</dbReference>
<dbReference type="EMBL" id="AY057519">
    <property type="protein sequence ID" value="AAL09759.1"/>
    <property type="molecule type" value="mRNA"/>
</dbReference>
<dbReference type="EMBL" id="BT015785">
    <property type="protein sequence ID" value="AAU90075.1"/>
    <property type="molecule type" value="mRNA"/>
</dbReference>
<dbReference type="EMBL" id="AK220709">
    <property type="protein sequence ID" value="BAD93818.1"/>
    <property type="status" value="ALT_INIT"/>
    <property type="molecule type" value="mRNA"/>
</dbReference>
<dbReference type="PIR" id="C96526">
    <property type="entry name" value="C96526"/>
</dbReference>
<dbReference type="RefSeq" id="NP_564534.1">
    <molecule id="P57720-1"/>
    <property type="nucleotide sequence ID" value="NM_103779.5"/>
</dbReference>
<dbReference type="SMR" id="P57720"/>
<dbReference type="BioGRID" id="26532">
    <property type="interactions" value="20"/>
</dbReference>
<dbReference type="FunCoup" id="P57720">
    <property type="interactions" value="1089"/>
</dbReference>
<dbReference type="STRING" id="3702.P57720"/>
<dbReference type="iPTMnet" id="P57720"/>
<dbReference type="MetOSite" id="P57720"/>
<dbReference type="PaxDb" id="3702-AT1G48850.1"/>
<dbReference type="ProteomicsDB" id="246881">
    <molecule id="P57720-1"/>
</dbReference>
<dbReference type="EnsemblPlants" id="AT1G48850.1">
    <molecule id="P57720-1"/>
    <property type="protein sequence ID" value="AT1G48850.1"/>
    <property type="gene ID" value="AT1G48850"/>
</dbReference>
<dbReference type="GeneID" id="841307"/>
<dbReference type="Gramene" id="AT1G48850.1">
    <molecule id="P57720-1"/>
    <property type="protein sequence ID" value="AT1G48850.1"/>
    <property type="gene ID" value="AT1G48850"/>
</dbReference>
<dbReference type="KEGG" id="ath:AT1G48850"/>
<dbReference type="Araport" id="AT1G48850"/>
<dbReference type="TAIR" id="AT1G48850">
    <property type="gene designation" value="EMB1144"/>
</dbReference>
<dbReference type="eggNOG" id="KOG4492">
    <property type="taxonomic scope" value="Eukaryota"/>
</dbReference>
<dbReference type="HOGENOM" id="CLU_034547_0_1_1"/>
<dbReference type="InParanoid" id="P57720"/>
<dbReference type="OMA" id="MLSINAV"/>
<dbReference type="OrthoDB" id="1721239at2759"/>
<dbReference type="PhylomeDB" id="P57720"/>
<dbReference type="BioCyc" id="ARA:AT1G48850-MONOMER"/>
<dbReference type="UniPathway" id="UPA00053">
    <property type="reaction ID" value="UER00090"/>
</dbReference>
<dbReference type="CD-CODE" id="4299E36E">
    <property type="entry name" value="Nucleolus"/>
</dbReference>
<dbReference type="PRO" id="PR:P57720"/>
<dbReference type="Proteomes" id="UP000006548">
    <property type="component" value="Chromosome 1"/>
</dbReference>
<dbReference type="ExpressionAtlas" id="P57720">
    <property type="expression patterns" value="baseline and differential"/>
</dbReference>
<dbReference type="GO" id="GO:0009507">
    <property type="term" value="C:chloroplast"/>
    <property type="evidence" value="ECO:0007005"/>
    <property type="project" value="TAIR"/>
</dbReference>
<dbReference type="GO" id="GO:0009570">
    <property type="term" value="C:chloroplast stroma"/>
    <property type="evidence" value="ECO:0007005"/>
    <property type="project" value="TAIR"/>
</dbReference>
<dbReference type="GO" id="GO:0005730">
    <property type="term" value="C:nucleolus"/>
    <property type="evidence" value="ECO:0007005"/>
    <property type="project" value="TAIR"/>
</dbReference>
<dbReference type="GO" id="GO:0005634">
    <property type="term" value="C:nucleus"/>
    <property type="evidence" value="ECO:0007005"/>
    <property type="project" value="TAIR"/>
</dbReference>
<dbReference type="GO" id="GO:0009536">
    <property type="term" value="C:plastid"/>
    <property type="evidence" value="ECO:0007005"/>
    <property type="project" value="TAIR"/>
</dbReference>
<dbReference type="GO" id="GO:0004107">
    <property type="term" value="F:chorismate synthase activity"/>
    <property type="evidence" value="ECO:0007669"/>
    <property type="project" value="UniProtKB-EC"/>
</dbReference>
<dbReference type="GO" id="GO:0008652">
    <property type="term" value="P:amino acid biosynthetic process"/>
    <property type="evidence" value="ECO:0007669"/>
    <property type="project" value="UniProtKB-KW"/>
</dbReference>
<dbReference type="GO" id="GO:0009073">
    <property type="term" value="P:aromatic amino acid family biosynthetic process"/>
    <property type="evidence" value="ECO:0007669"/>
    <property type="project" value="UniProtKB-KW"/>
</dbReference>
<dbReference type="GO" id="GO:0009423">
    <property type="term" value="P:chorismate biosynthetic process"/>
    <property type="evidence" value="ECO:0007669"/>
    <property type="project" value="UniProtKB-UniPathway"/>
</dbReference>
<dbReference type="CDD" id="cd07304">
    <property type="entry name" value="Chorismate_synthase"/>
    <property type="match status" value="1"/>
</dbReference>
<dbReference type="FunFam" id="3.60.150.10:FF:000003">
    <property type="entry name" value="Chorismate synthase"/>
    <property type="match status" value="1"/>
</dbReference>
<dbReference type="Gene3D" id="3.60.150.10">
    <property type="entry name" value="Chorismate synthase AroC"/>
    <property type="match status" value="1"/>
</dbReference>
<dbReference type="HAMAP" id="MF_00300">
    <property type="entry name" value="Chorismate_synth"/>
    <property type="match status" value="1"/>
</dbReference>
<dbReference type="InterPro" id="IPR000453">
    <property type="entry name" value="Chorismate_synth"/>
</dbReference>
<dbReference type="InterPro" id="IPR035904">
    <property type="entry name" value="Chorismate_synth_AroC_sf"/>
</dbReference>
<dbReference type="InterPro" id="IPR020541">
    <property type="entry name" value="Chorismate_synthase_CS"/>
</dbReference>
<dbReference type="NCBIfam" id="TIGR00033">
    <property type="entry name" value="aroC"/>
    <property type="match status" value="1"/>
</dbReference>
<dbReference type="NCBIfam" id="NF003793">
    <property type="entry name" value="PRK05382.1"/>
    <property type="match status" value="1"/>
</dbReference>
<dbReference type="PANTHER" id="PTHR21085">
    <property type="entry name" value="CHORISMATE SYNTHASE"/>
    <property type="match status" value="1"/>
</dbReference>
<dbReference type="PANTHER" id="PTHR21085:SF0">
    <property type="entry name" value="CHORISMATE SYNTHASE"/>
    <property type="match status" value="1"/>
</dbReference>
<dbReference type="Pfam" id="PF01264">
    <property type="entry name" value="Chorismate_synt"/>
    <property type="match status" value="1"/>
</dbReference>
<dbReference type="SUPFAM" id="SSF103263">
    <property type="entry name" value="Chorismate synthase, AroC"/>
    <property type="match status" value="1"/>
</dbReference>
<dbReference type="PROSITE" id="PS00787">
    <property type="entry name" value="CHORISMATE_SYNTHASE_1"/>
    <property type="match status" value="1"/>
</dbReference>
<dbReference type="PROSITE" id="PS00788">
    <property type="entry name" value="CHORISMATE_SYNTHASE_2"/>
    <property type="match status" value="1"/>
</dbReference>
<dbReference type="PROSITE" id="PS00789">
    <property type="entry name" value="CHORISMATE_SYNTHASE_3"/>
    <property type="match status" value="1"/>
</dbReference>
<organism>
    <name type="scientific">Arabidopsis thaliana</name>
    <name type="common">Mouse-ear cress</name>
    <dbReference type="NCBI Taxonomy" id="3702"/>
    <lineage>
        <taxon>Eukaryota</taxon>
        <taxon>Viridiplantae</taxon>
        <taxon>Streptophyta</taxon>
        <taxon>Embryophyta</taxon>
        <taxon>Tracheophyta</taxon>
        <taxon>Spermatophyta</taxon>
        <taxon>Magnoliopsida</taxon>
        <taxon>eudicotyledons</taxon>
        <taxon>Gunneridae</taxon>
        <taxon>Pentapetalae</taxon>
        <taxon>rosids</taxon>
        <taxon>malvids</taxon>
        <taxon>Brassicales</taxon>
        <taxon>Brassicaceae</taxon>
        <taxon>Camelineae</taxon>
        <taxon>Arabidopsis</taxon>
    </lineage>
</organism>
<proteinExistence type="evidence at transcript level"/>
<comment type="function">
    <text evidence="1">Catalyzes the last common step of the biosynthesis of aromatic amino acids, produced via the shikimic acid pathway.</text>
</comment>
<comment type="catalytic activity">
    <reaction>
        <text>5-O-(1-carboxyvinyl)-3-phosphoshikimate = chorismate + phosphate</text>
        <dbReference type="Rhea" id="RHEA:21020"/>
        <dbReference type="ChEBI" id="CHEBI:29748"/>
        <dbReference type="ChEBI" id="CHEBI:43474"/>
        <dbReference type="ChEBI" id="CHEBI:57701"/>
        <dbReference type="EC" id="4.2.3.5"/>
    </reaction>
</comment>
<comment type="cofactor">
    <cofactor evidence="1">
        <name>FMNH2</name>
        <dbReference type="ChEBI" id="CHEBI:57618"/>
    </cofactor>
</comment>
<comment type="pathway">
    <text>Metabolic intermediate biosynthesis; chorismate biosynthesis; chorismate from D-erythrose 4-phosphate and phosphoenolpyruvate: step 7/7.</text>
</comment>
<comment type="subunit">
    <text evidence="1">Homotetramer.</text>
</comment>
<comment type="subcellular location">
    <subcellularLocation>
        <location evidence="1">Plastid</location>
        <location evidence="1">Chloroplast</location>
    </subcellularLocation>
</comment>
<comment type="alternative products">
    <event type="alternative splicing"/>
    <isoform>
        <id>P57720-1</id>
        <name>1</name>
        <sequence type="displayed"/>
    </isoform>
    <text>A number of isoforms are produced. According to EST sequences.</text>
</comment>
<comment type="similarity">
    <text evidence="3">Belongs to the chorismate synthase family.</text>
</comment>
<comment type="sequence caution" evidence="3">
    <conflict type="erroneous gene model prediction">
        <sequence resource="EMBL-CDS" id="AAG29740"/>
    </conflict>
</comment>
<comment type="sequence caution" evidence="3">
    <conflict type="erroneous gene model prediction">
        <sequence resource="EMBL-CDS" id="AAG50662"/>
    </conflict>
</comment>
<comment type="sequence caution" evidence="3">
    <conflict type="erroneous initiation">
        <sequence resource="EMBL-CDS" id="BAD93818"/>
    </conflict>
</comment>
<accession>P57720</accession>
<accession>Q570J9</accession>
<accession>Q93ZI3</accession>
<feature type="transit peptide" description="Chloroplast" evidence="3">
    <location>
        <begin position="1"/>
        <end position="50"/>
    </location>
</feature>
<feature type="chain" id="PRO_0000002294" description="Chorismate synthase, chloroplastic">
    <location>
        <begin position="51"/>
        <end position="436"/>
    </location>
</feature>
<feature type="region of interest" description="Disordered" evidence="2">
    <location>
        <begin position="1"/>
        <end position="24"/>
    </location>
</feature>
<protein>
    <recommendedName>
        <fullName>Chorismate synthase, chloroplastic</fullName>
        <ecNumber>4.2.3.5</ecNumber>
    </recommendedName>
    <alternativeName>
        <fullName>5-enolpyruvylshikimate-3-phosphate phospholyase</fullName>
    </alternativeName>
    <alternativeName>
        <fullName>Protein EMBRYO DEFECTIVE 1144</fullName>
    </alternativeName>
</protein>